<accession>Q0T6N3</accession>
<organism>
    <name type="scientific">Shigella flexneri serotype 5b (strain 8401)</name>
    <dbReference type="NCBI Taxonomy" id="373384"/>
    <lineage>
        <taxon>Bacteria</taxon>
        <taxon>Pseudomonadati</taxon>
        <taxon>Pseudomonadota</taxon>
        <taxon>Gammaproteobacteria</taxon>
        <taxon>Enterobacterales</taxon>
        <taxon>Enterobacteriaceae</taxon>
        <taxon>Shigella</taxon>
    </lineage>
</organism>
<dbReference type="EC" id="2.3.1.251" evidence="1"/>
<dbReference type="EMBL" id="CP000266">
    <property type="protein sequence ID" value="ABF02943.1"/>
    <property type="status" value="ALT_INIT"/>
    <property type="molecule type" value="Genomic_DNA"/>
</dbReference>
<dbReference type="RefSeq" id="WP_005049488.1">
    <property type="nucleotide sequence ID" value="NC_008258.1"/>
</dbReference>
<dbReference type="BMRB" id="Q0T6N3"/>
<dbReference type="SMR" id="Q0T6N3"/>
<dbReference type="KEGG" id="sfv:SFV_0703"/>
<dbReference type="HOGENOM" id="CLU_104099_0_0_6"/>
<dbReference type="Proteomes" id="UP000000659">
    <property type="component" value="Chromosome"/>
</dbReference>
<dbReference type="GO" id="GO:0009279">
    <property type="term" value="C:cell outer membrane"/>
    <property type="evidence" value="ECO:0007669"/>
    <property type="project" value="UniProtKB-SubCell"/>
</dbReference>
<dbReference type="GO" id="GO:0016746">
    <property type="term" value="F:acyltransferase activity"/>
    <property type="evidence" value="ECO:0007669"/>
    <property type="project" value="UniProtKB-UniRule"/>
</dbReference>
<dbReference type="GO" id="GO:0009245">
    <property type="term" value="P:lipid A biosynthetic process"/>
    <property type="evidence" value="ECO:0007669"/>
    <property type="project" value="UniProtKB-UniRule"/>
</dbReference>
<dbReference type="FunFam" id="2.40.160.20:FF:000002">
    <property type="entry name" value="Lipid A palmitoyltransferase PagP"/>
    <property type="match status" value="1"/>
</dbReference>
<dbReference type="Gene3D" id="2.40.160.20">
    <property type="match status" value="1"/>
</dbReference>
<dbReference type="HAMAP" id="MF_00837">
    <property type="entry name" value="PagP_transferase"/>
    <property type="match status" value="1"/>
</dbReference>
<dbReference type="InterPro" id="IPR009746">
    <property type="entry name" value="LipidA_acyl_PagP"/>
</dbReference>
<dbReference type="InterPro" id="IPR011250">
    <property type="entry name" value="OMP/PagP_b-brl"/>
</dbReference>
<dbReference type="NCBIfam" id="NF008271">
    <property type="entry name" value="PRK11045.1"/>
    <property type="match status" value="1"/>
</dbReference>
<dbReference type="Pfam" id="PF07017">
    <property type="entry name" value="PagP"/>
    <property type="match status" value="1"/>
</dbReference>
<dbReference type="SUPFAM" id="SSF56925">
    <property type="entry name" value="OMPA-like"/>
    <property type="match status" value="1"/>
</dbReference>
<protein>
    <recommendedName>
        <fullName evidence="1">Lipid A acyltransferase PagP</fullName>
        <ecNumber evidence="1">2.3.1.251</ecNumber>
    </recommendedName>
    <alternativeName>
        <fullName evidence="1">Lipid A acylation protein</fullName>
    </alternativeName>
</protein>
<feature type="signal peptide" evidence="1">
    <location>
        <begin position="1"/>
        <end position="25"/>
    </location>
</feature>
<feature type="chain" id="PRO_0000414476" description="Lipid A acyltransferase PagP">
    <location>
        <begin position="26"/>
        <end position="186"/>
    </location>
</feature>
<feature type="active site" evidence="1">
    <location>
        <position position="58"/>
    </location>
</feature>
<feature type="active site" evidence="1">
    <location>
        <position position="101"/>
    </location>
</feature>
<feature type="active site" evidence="1">
    <location>
        <position position="102"/>
    </location>
</feature>
<feature type="site" description="Role in lipopolysaccharide recognition" evidence="1">
    <location>
        <position position="67"/>
    </location>
</feature>
<feature type="site" description="Role in the phospholipid gating" evidence="1">
    <location>
        <position position="172"/>
    </location>
</feature>
<name>PAGP_SHIF8</name>
<comment type="function">
    <text evidence="1">Transfers a fatty acid residue from the sn-1 position of a phospholipid to the N-linked hydroxyfatty acid chain on the proximal unit of lipid A or its precursors.</text>
</comment>
<comment type="catalytic activity">
    <reaction evidence="1">
        <text>a lipid A + a 1,2-diacyl-sn-glycero-3-phosphocholine = a hepta-acyl lipid A + a 2-acyl-sn-glycero-3-phosphocholine</text>
        <dbReference type="Rhea" id="RHEA:74275"/>
        <dbReference type="ChEBI" id="CHEBI:57643"/>
        <dbReference type="ChEBI" id="CHEBI:57875"/>
        <dbReference type="ChEBI" id="CHEBI:193141"/>
        <dbReference type="ChEBI" id="CHEBI:193142"/>
        <dbReference type="EC" id="2.3.1.251"/>
    </reaction>
</comment>
<comment type="catalytic activity">
    <reaction evidence="1">
        <text>a lipid IVA + a 1,2-diacyl-sn-glycero-3-phosphocholine = a lipid IVB + a 2-acyl-sn-glycero-3-phosphocholine</text>
        <dbReference type="Rhea" id="RHEA:74279"/>
        <dbReference type="ChEBI" id="CHEBI:57643"/>
        <dbReference type="ChEBI" id="CHEBI:57875"/>
        <dbReference type="ChEBI" id="CHEBI:176425"/>
        <dbReference type="ChEBI" id="CHEBI:193143"/>
        <dbReference type="EC" id="2.3.1.251"/>
    </reaction>
</comment>
<comment type="catalytic activity">
    <reaction evidence="1">
        <text>a lipid IIA + a 1,2-diacyl-sn-glycero-3-phosphocholine = a lipid IIB + a 2-acyl-sn-glycero-3-phosphocholine</text>
        <dbReference type="Rhea" id="RHEA:74283"/>
        <dbReference type="ChEBI" id="CHEBI:57643"/>
        <dbReference type="ChEBI" id="CHEBI:57875"/>
        <dbReference type="ChEBI" id="CHEBI:193144"/>
        <dbReference type="ChEBI" id="CHEBI:193145"/>
        <dbReference type="EC" id="2.3.1.251"/>
    </reaction>
</comment>
<comment type="subunit">
    <text evidence="1">Homodimer.</text>
</comment>
<comment type="subcellular location">
    <subcellularLocation>
        <location evidence="1">Cell outer membrane</location>
    </subcellularLocation>
</comment>
<comment type="similarity">
    <text evidence="1 2">Belongs to the lipid A palmitoyltransferase family.</text>
</comment>
<comment type="sequence caution" evidence="2">
    <conflict type="erroneous initiation">
        <sequence resource="EMBL-CDS" id="ABF02943"/>
    </conflict>
    <text>Extended N-terminus.</text>
</comment>
<reference key="1">
    <citation type="journal article" date="2006" name="BMC Genomics">
        <title>Complete genome sequence of Shigella flexneri 5b and comparison with Shigella flexneri 2a.</title>
        <authorList>
            <person name="Nie H."/>
            <person name="Yang F."/>
            <person name="Zhang X."/>
            <person name="Yang J."/>
            <person name="Chen L."/>
            <person name="Wang J."/>
            <person name="Xiong Z."/>
            <person name="Peng J."/>
            <person name="Sun L."/>
            <person name="Dong J."/>
            <person name="Xue Y."/>
            <person name="Xu X."/>
            <person name="Chen S."/>
            <person name="Yao Z."/>
            <person name="Shen Y."/>
            <person name="Jin Q."/>
        </authorList>
    </citation>
    <scope>NUCLEOTIDE SEQUENCE [LARGE SCALE GENOMIC DNA]</scope>
    <source>
        <strain>8401</strain>
    </source>
</reference>
<proteinExistence type="inferred from homology"/>
<sequence length="186" mass="21740">MNVSKYVAIFSFVFIQLISVGKVFANADERMTTFRENIAQTWQQPEHYDLYIPAITWHARFAYDKEKTDRYNERPWGGGFGLSRWDEKGNWHGLYAMAFKDSWNKWEPIAGYGWESTWRPLADENFHLGLGFTAGVTARDNWNYIPLPVLLPLASVGYGPVTFQMTYIPGTYNNGNVYFAWMRFQF</sequence>
<gene>
    <name evidence="1" type="primary">pagP</name>
    <name type="synonym">crcA</name>
    <name type="ordered locus">SFV_0703</name>
</gene>
<keyword id="KW-0012">Acyltransferase</keyword>
<keyword id="KW-0998">Cell outer membrane</keyword>
<keyword id="KW-0472">Membrane</keyword>
<keyword id="KW-0732">Signal</keyword>
<keyword id="KW-0808">Transferase</keyword>
<evidence type="ECO:0000255" key="1">
    <source>
        <dbReference type="HAMAP-Rule" id="MF_00837"/>
    </source>
</evidence>
<evidence type="ECO:0000305" key="2"/>